<gene>
    <name evidence="1" type="primary">rpsI</name>
    <name type="ordered locus">Msil_1872</name>
</gene>
<keyword id="KW-1185">Reference proteome</keyword>
<keyword id="KW-0687">Ribonucleoprotein</keyword>
<keyword id="KW-0689">Ribosomal protein</keyword>
<protein>
    <recommendedName>
        <fullName evidence="1">Small ribosomal subunit protein uS9</fullName>
    </recommendedName>
    <alternativeName>
        <fullName evidence="2">30S ribosomal protein S9</fullName>
    </alternativeName>
</protein>
<organism>
    <name type="scientific">Methylocella silvestris (strain DSM 15510 / CIP 108128 / LMG 27833 / NCIMB 13906 / BL2)</name>
    <dbReference type="NCBI Taxonomy" id="395965"/>
    <lineage>
        <taxon>Bacteria</taxon>
        <taxon>Pseudomonadati</taxon>
        <taxon>Pseudomonadota</taxon>
        <taxon>Alphaproteobacteria</taxon>
        <taxon>Hyphomicrobiales</taxon>
        <taxon>Beijerinckiaceae</taxon>
        <taxon>Methylocella</taxon>
    </lineage>
</organism>
<evidence type="ECO:0000255" key="1">
    <source>
        <dbReference type="HAMAP-Rule" id="MF_00532"/>
    </source>
</evidence>
<evidence type="ECO:0000305" key="2"/>
<accession>B8ENN1</accession>
<sequence length="159" mass="17457">MAETFSSLQDLKSATAAPTQEAPHYVQKLDAQGRAYATGKRKDAVARVWIKPGSGKVVVNGRAVEVYFARPVLRMILQQPLGVAKRVDQYDLTVTVAGGGLSGQAGAVRHGLSKALVAFEPELRGVLKKEGFLTRDSRVVERKKYGKKKARRSFQFSKR</sequence>
<feature type="chain" id="PRO_1000146462" description="Small ribosomal subunit protein uS9">
    <location>
        <begin position="1"/>
        <end position="159"/>
    </location>
</feature>
<proteinExistence type="inferred from homology"/>
<name>RS9_METSB</name>
<reference key="1">
    <citation type="journal article" date="2010" name="J. Bacteriol.">
        <title>Complete genome sequence of the aerobic facultative methanotroph Methylocella silvestris BL2.</title>
        <authorList>
            <person name="Chen Y."/>
            <person name="Crombie A."/>
            <person name="Rahman M.T."/>
            <person name="Dedysh S.N."/>
            <person name="Liesack W."/>
            <person name="Stott M.B."/>
            <person name="Alam M."/>
            <person name="Theisen A.R."/>
            <person name="Murrell J.C."/>
            <person name="Dunfield P.F."/>
        </authorList>
    </citation>
    <scope>NUCLEOTIDE SEQUENCE [LARGE SCALE GENOMIC DNA]</scope>
    <source>
        <strain>DSM 15510 / CIP 108128 / LMG 27833 / NCIMB 13906 / BL2</strain>
    </source>
</reference>
<comment type="similarity">
    <text evidence="1">Belongs to the universal ribosomal protein uS9 family.</text>
</comment>
<dbReference type="EMBL" id="CP001280">
    <property type="protein sequence ID" value="ACK50817.1"/>
    <property type="molecule type" value="Genomic_DNA"/>
</dbReference>
<dbReference type="RefSeq" id="WP_012590887.1">
    <property type="nucleotide sequence ID" value="NC_011666.1"/>
</dbReference>
<dbReference type="SMR" id="B8ENN1"/>
<dbReference type="STRING" id="395965.Msil_1872"/>
<dbReference type="KEGG" id="msl:Msil_1872"/>
<dbReference type="eggNOG" id="COG0103">
    <property type="taxonomic scope" value="Bacteria"/>
</dbReference>
<dbReference type="HOGENOM" id="CLU_046483_2_0_5"/>
<dbReference type="OrthoDB" id="9803965at2"/>
<dbReference type="Proteomes" id="UP000002257">
    <property type="component" value="Chromosome"/>
</dbReference>
<dbReference type="GO" id="GO:0022627">
    <property type="term" value="C:cytosolic small ribosomal subunit"/>
    <property type="evidence" value="ECO:0007669"/>
    <property type="project" value="TreeGrafter"/>
</dbReference>
<dbReference type="GO" id="GO:0003723">
    <property type="term" value="F:RNA binding"/>
    <property type="evidence" value="ECO:0007669"/>
    <property type="project" value="TreeGrafter"/>
</dbReference>
<dbReference type="GO" id="GO:0003735">
    <property type="term" value="F:structural constituent of ribosome"/>
    <property type="evidence" value="ECO:0007669"/>
    <property type="project" value="InterPro"/>
</dbReference>
<dbReference type="GO" id="GO:0006412">
    <property type="term" value="P:translation"/>
    <property type="evidence" value="ECO:0007669"/>
    <property type="project" value="UniProtKB-UniRule"/>
</dbReference>
<dbReference type="FunFam" id="3.30.230.10:FF:000001">
    <property type="entry name" value="30S ribosomal protein S9"/>
    <property type="match status" value="1"/>
</dbReference>
<dbReference type="Gene3D" id="3.30.230.10">
    <property type="match status" value="1"/>
</dbReference>
<dbReference type="HAMAP" id="MF_00532_B">
    <property type="entry name" value="Ribosomal_uS9_B"/>
    <property type="match status" value="1"/>
</dbReference>
<dbReference type="InterPro" id="IPR020568">
    <property type="entry name" value="Ribosomal_Su5_D2-typ_SF"/>
</dbReference>
<dbReference type="InterPro" id="IPR000754">
    <property type="entry name" value="Ribosomal_uS9"/>
</dbReference>
<dbReference type="InterPro" id="IPR023035">
    <property type="entry name" value="Ribosomal_uS9_bac/plastid"/>
</dbReference>
<dbReference type="InterPro" id="IPR020574">
    <property type="entry name" value="Ribosomal_uS9_CS"/>
</dbReference>
<dbReference type="InterPro" id="IPR014721">
    <property type="entry name" value="Ribsml_uS5_D2-typ_fold_subgr"/>
</dbReference>
<dbReference type="NCBIfam" id="NF001099">
    <property type="entry name" value="PRK00132.1"/>
    <property type="match status" value="1"/>
</dbReference>
<dbReference type="PANTHER" id="PTHR21569">
    <property type="entry name" value="RIBOSOMAL PROTEIN S9"/>
    <property type="match status" value="1"/>
</dbReference>
<dbReference type="PANTHER" id="PTHR21569:SF1">
    <property type="entry name" value="SMALL RIBOSOMAL SUBUNIT PROTEIN US9M"/>
    <property type="match status" value="1"/>
</dbReference>
<dbReference type="Pfam" id="PF00380">
    <property type="entry name" value="Ribosomal_S9"/>
    <property type="match status" value="1"/>
</dbReference>
<dbReference type="SUPFAM" id="SSF54211">
    <property type="entry name" value="Ribosomal protein S5 domain 2-like"/>
    <property type="match status" value="1"/>
</dbReference>
<dbReference type="PROSITE" id="PS00360">
    <property type="entry name" value="RIBOSOMAL_S9"/>
    <property type="match status" value="1"/>
</dbReference>